<organism>
    <name type="scientific">Aeromonas hydrophila subsp. hydrophila (strain ATCC 7966 / DSM 30187 / BCRC 13018 / CCUG 14551 / JCM 1027 / KCTC 2358 / NCIMB 9240 / NCTC 8049)</name>
    <dbReference type="NCBI Taxonomy" id="380703"/>
    <lineage>
        <taxon>Bacteria</taxon>
        <taxon>Pseudomonadati</taxon>
        <taxon>Pseudomonadota</taxon>
        <taxon>Gammaproteobacteria</taxon>
        <taxon>Aeromonadales</taxon>
        <taxon>Aeromonadaceae</taxon>
        <taxon>Aeromonas</taxon>
    </lineage>
</organism>
<dbReference type="EC" id="2.7.4.25" evidence="1"/>
<dbReference type="EMBL" id="CP000462">
    <property type="protein sequence ID" value="ABK38398.1"/>
    <property type="molecule type" value="Genomic_DNA"/>
</dbReference>
<dbReference type="RefSeq" id="WP_011705689.1">
    <property type="nucleotide sequence ID" value="NC_008570.1"/>
</dbReference>
<dbReference type="RefSeq" id="YP_856343.1">
    <property type="nucleotide sequence ID" value="NC_008570.1"/>
</dbReference>
<dbReference type="SMR" id="A0KJ92"/>
<dbReference type="STRING" id="380703.AHA_1808"/>
<dbReference type="EnsemblBacteria" id="ABK38398">
    <property type="protein sequence ID" value="ABK38398"/>
    <property type="gene ID" value="AHA_1808"/>
</dbReference>
<dbReference type="GeneID" id="4490131"/>
<dbReference type="KEGG" id="aha:AHA_1808"/>
<dbReference type="PATRIC" id="fig|380703.7.peg.1824"/>
<dbReference type="eggNOG" id="COG0283">
    <property type="taxonomic scope" value="Bacteria"/>
</dbReference>
<dbReference type="HOGENOM" id="CLU_079959_0_2_6"/>
<dbReference type="OrthoDB" id="9807434at2"/>
<dbReference type="Proteomes" id="UP000000756">
    <property type="component" value="Chromosome"/>
</dbReference>
<dbReference type="GO" id="GO:0005829">
    <property type="term" value="C:cytosol"/>
    <property type="evidence" value="ECO:0007669"/>
    <property type="project" value="TreeGrafter"/>
</dbReference>
<dbReference type="GO" id="GO:0005524">
    <property type="term" value="F:ATP binding"/>
    <property type="evidence" value="ECO:0007669"/>
    <property type="project" value="UniProtKB-UniRule"/>
</dbReference>
<dbReference type="GO" id="GO:0036430">
    <property type="term" value="F:CMP kinase activity"/>
    <property type="evidence" value="ECO:0007669"/>
    <property type="project" value="RHEA"/>
</dbReference>
<dbReference type="GO" id="GO:0036431">
    <property type="term" value="F:dCMP kinase activity"/>
    <property type="evidence" value="ECO:0007669"/>
    <property type="project" value="RHEA"/>
</dbReference>
<dbReference type="GO" id="GO:0015949">
    <property type="term" value="P:nucleobase-containing small molecule interconversion"/>
    <property type="evidence" value="ECO:0007669"/>
    <property type="project" value="TreeGrafter"/>
</dbReference>
<dbReference type="GO" id="GO:0006220">
    <property type="term" value="P:pyrimidine nucleotide metabolic process"/>
    <property type="evidence" value="ECO:0007669"/>
    <property type="project" value="UniProtKB-UniRule"/>
</dbReference>
<dbReference type="CDD" id="cd02020">
    <property type="entry name" value="CMPK"/>
    <property type="match status" value="1"/>
</dbReference>
<dbReference type="FunFam" id="3.40.50.300:FF:000262">
    <property type="entry name" value="Cytidylate kinase"/>
    <property type="match status" value="1"/>
</dbReference>
<dbReference type="Gene3D" id="3.40.50.300">
    <property type="entry name" value="P-loop containing nucleotide triphosphate hydrolases"/>
    <property type="match status" value="1"/>
</dbReference>
<dbReference type="HAMAP" id="MF_00238">
    <property type="entry name" value="Cytidyl_kinase_type1"/>
    <property type="match status" value="1"/>
</dbReference>
<dbReference type="InterPro" id="IPR003136">
    <property type="entry name" value="Cytidylate_kin"/>
</dbReference>
<dbReference type="InterPro" id="IPR011994">
    <property type="entry name" value="Cytidylate_kinase_dom"/>
</dbReference>
<dbReference type="InterPro" id="IPR027417">
    <property type="entry name" value="P-loop_NTPase"/>
</dbReference>
<dbReference type="NCBIfam" id="TIGR00017">
    <property type="entry name" value="cmk"/>
    <property type="match status" value="1"/>
</dbReference>
<dbReference type="PANTHER" id="PTHR21299:SF2">
    <property type="entry name" value="CYTIDYLATE KINASE"/>
    <property type="match status" value="1"/>
</dbReference>
<dbReference type="PANTHER" id="PTHR21299">
    <property type="entry name" value="CYTIDYLATE KINASE/PANTOATE-BETA-ALANINE LIGASE"/>
    <property type="match status" value="1"/>
</dbReference>
<dbReference type="Pfam" id="PF02224">
    <property type="entry name" value="Cytidylate_kin"/>
    <property type="match status" value="1"/>
</dbReference>
<dbReference type="SUPFAM" id="SSF52540">
    <property type="entry name" value="P-loop containing nucleoside triphosphate hydrolases"/>
    <property type="match status" value="1"/>
</dbReference>
<gene>
    <name evidence="1" type="primary">cmk</name>
    <name type="ordered locus">AHA_1808</name>
</gene>
<proteinExistence type="inferred from homology"/>
<reference key="1">
    <citation type="journal article" date="2006" name="J. Bacteriol.">
        <title>Genome sequence of Aeromonas hydrophila ATCC 7966T: jack of all trades.</title>
        <authorList>
            <person name="Seshadri R."/>
            <person name="Joseph S.W."/>
            <person name="Chopra A.K."/>
            <person name="Sha J."/>
            <person name="Shaw J."/>
            <person name="Graf J."/>
            <person name="Haft D.H."/>
            <person name="Wu M."/>
            <person name="Ren Q."/>
            <person name="Rosovitz M.J."/>
            <person name="Madupu R."/>
            <person name="Tallon L."/>
            <person name="Kim M."/>
            <person name="Jin S."/>
            <person name="Vuong H."/>
            <person name="Stine O.C."/>
            <person name="Ali A."/>
            <person name="Horneman A.J."/>
            <person name="Heidelberg J.F."/>
        </authorList>
    </citation>
    <scope>NUCLEOTIDE SEQUENCE [LARGE SCALE GENOMIC DNA]</scope>
    <source>
        <strain>ATCC 7966 / DSM 30187 / BCRC 13018 / CCUG 14551 / JCM 1027 / KCTC 2358 / NCIMB 9240 / NCTC 8049</strain>
    </source>
</reference>
<evidence type="ECO:0000255" key="1">
    <source>
        <dbReference type="HAMAP-Rule" id="MF_00238"/>
    </source>
</evidence>
<protein>
    <recommendedName>
        <fullName evidence="1">Cytidylate kinase</fullName>
        <shortName evidence="1">CK</shortName>
        <ecNumber evidence="1">2.7.4.25</ecNumber>
    </recommendedName>
    <alternativeName>
        <fullName evidence="1">Cytidine monophosphate kinase</fullName>
        <shortName evidence="1">CMP kinase</shortName>
    </alternativeName>
</protein>
<comment type="catalytic activity">
    <reaction evidence="1">
        <text>CMP + ATP = CDP + ADP</text>
        <dbReference type="Rhea" id="RHEA:11600"/>
        <dbReference type="ChEBI" id="CHEBI:30616"/>
        <dbReference type="ChEBI" id="CHEBI:58069"/>
        <dbReference type="ChEBI" id="CHEBI:60377"/>
        <dbReference type="ChEBI" id="CHEBI:456216"/>
        <dbReference type="EC" id="2.7.4.25"/>
    </reaction>
</comment>
<comment type="catalytic activity">
    <reaction evidence="1">
        <text>dCMP + ATP = dCDP + ADP</text>
        <dbReference type="Rhea" id="RHEA:25094"/>
        <dbReference type="ChEBI" id="CHEBI:30616"/>
        <dbReference type="ChEBI" id="CHEBI:57566"/>
        <dbReference type="ChEBI" id="CHEBI:58593"/>
        <dbReference type="ChEBI" id="CHEBI:456216"/>
        <dbReference type="EC" id="2.7.4.25"/>
    </reaction>
</comment>
<comment type="subcellular location">
    <subcellularLocation>
        <location evidence="1">Cytoplasm</location>
    </subcellularLocation>
</comment>
<comment type="similarity">
    <text evidence="1">Belongs to the cytidylate kinase family. Type 1 subfamily.</text>
</comment>
<accession>A0KJ92</accession>
<name>KCY_AERHH</name>
<keyword id="KW-0067">ATP-binding</keyword>
<keyword id="KW-0963">Cytoplasm</keyword>
<keyword id="KW-0418">Kinase</keyword>
<keyword id="KW-0547">Nucleotide-binding</keyword>
<keyword id="KW-1185">Reference proteome</keyword>
<keyword id="KW-0808">Transferase</keyword>
<feature type="chain" id="PRO_1000048179" description="Cytidylate kinase">
    <location>
        <begin position="1"/>
        <end position="230"/>
    </location>
</feature>
<feature type="binding site" evidence="1">
    <location>
        <begin position="12"/>
        <end position="20"/>
    </location>
    <ligand>
        <name>ATP</name>
        <dbReference type="ChEBI" id="CHEBI:30616"/>
    </ligand>
</feature>
<sequence>MPQMAPVMTIDGPSGAGKGTLCQLLAEKLGWHLLDSGAIYRVLALAALHHDVELDAEAALVPLAANLDVQFQVDAEQVKVVLEGEDVSRTIRTEEVGNAASKIAAFPRVREALLRRQRAFRQAPGLIADGRDMGTVVFPEAEVKIFLDASAEERAARRYKQLQDKGFDVNFERLLTEIRERDDRDRNRAVAPLKPAEDALVVDSTAMSIDEVLVTVLAYAEQQLGDVSTN</sequence>